<name>Y934_STAA1</name>
<organism>
    <name type="scientific">Staphylococcus aureus (strain Mu3 / ATCC 700698)</name>
    <dbReference type="NCBI Taxonomy" id="418127"/>
    <lineage>
        <taxon>Bacteria</taxon>
        <taxon>Bacillati</taxon>
        <taxon>Bacillota</taxon>
        <taxon>Bacilli</taxon>
        <taxon>Bacillales</taxon>
        <taxon>Staphylococcaceae</taxon>
        <taxon>Staphylococcus</taxon>
    </lineage>
</organism>
<gene>
    <name type="ordered locus">SAHV_0934</name>
</gene>
<dbReference type="EMBL" id="AP009324">
    <property type="protein sequence ID" value="BAF77817.1"/>
    <property type="molecule type" value="Genomic_DNA"/>
</dbReference>
<dbReference type="RefSeq" id="WP_001068337.1">
    <property type="nucleotide sequence ID" value="NZ_CTYB01000028.1"/>
</dbReference>
<dbReference type="SMR" id="A7X0E5"/>
<dbReference type="KEGG" id="saw:SAHV_0934"/>
<dbReference type="HOGENOM" id="CLU_182025_0_0_9"/>
<dbReference type="HAMAP" id="MF_01542">
    <property type="entry name" value="UPF0349"/>
    <property type="match status" value="1"/>
</dbReference>
<dbReference type="InterPro" id="IPR009910">
    <property type="entry name" value="DUF1450"/>
</dbReference>
<dbReference type="InterPro" id="IPR022916">
    <property type="entry name" value="UPF0349"/>
</dbReference>
<dbReference type="NCBIfam" id="NF010190">
    <property type="entry name" value="PRK13669.1"/>
    <property type="match status" value="1"/>
</dbReference>
<dbReference type="Pfam" id="PF07293">
    <property type="entry name" value="DUF1450"/>
    <property type="match status" value="1"/>
</dbReference>
<comment type="similarity">
    <text evidence="1">Belongs to the UPF0349 family.</text>
</comment>
<reference key="1">
    <citation type="journal article" date="2008" name="Antimicrob. Agents Chemother.">
        <title>Mutated response regulator graR is responsible for phenotypic conversion of Staphylococcus aureus from heterogeneous vancomycin-intermediate resistance to vancomycin-intermediate resistance.</title>
        <authorList>
            <person name="Neoh H.-M."/>
            <person name="Cui L."/>
            <person name="Yuzawa H."/>
            <person name="Takeuchi F."/>
            <person name="Matsuo M."/>
            <person name="Hiramatsu K."/>
        </authorList>
    </citation>
    <scope>NUCLEOTIDE SEQUENCE [LARGE SCALE GENOMIC DNA]</scope>
    <source>
        <strain>Mu3 / ATCC 700698</strain>
    </source>
</reference>
<feature type="chain" id="PRO_1000068786" description="UPF0349 protein SAHV_0934">
    <location>
        <begin position="1"/>
        <end position="78"/>
    </location>
</feature>
<protein>
    <recommendedName>
        <fullName evidence="1">UPF0349 protein SAHV_0934</fullName>
    </recommendedName>
</protein>
<accession>A7X0E5</accession>
<sequence length="78" mass="8657">MNPIVEFCLSNMAKGGDYVFNQLENDPDVDVLEYGCLTHCGICSAGLYALVNGDIVEGDSPEELLQNIYAHIKETWIF</sequence>
<evidence type="ECO:0000255" key="1">
    <source>
        <dbReference type="HAMAP-Rule" id="MF_01542"/>
    </source>
</evidence>
<proteinExistence type="inferred from homology"/>